<dbReference type="EC" id="5.3.1.1" evidence="1"/>
<dbReference type="EMBL" id="BX640413">
    <property type="protein sequence ID" value="CAE41106.1"/>
    <property type="molecule type" value="Genomic_DNA"/>
</dbReference>
<dbReference type="RefSeq" id="NP_879616.1">
    <property type="nucleotide sequence ID" value="NC_002929.2"/>
</dbReference>
<dbReference type="RefSeq" id="WP_003813996.1">
    <property type="nucleotide sequence ID" value="NZ_CP039022.1"/>
</dbReference>
<dbReference type="SMR" id="Q7VZT5"/>
<dbReference type="STRING" id="257313.BP0801"/>
<dbReference type="PaxDb" id="257313-BP0801"/>
<dbReference type="GeneID" id="93205210"/>
<dbReference type="KEGG" id="bpe:BP0801"/>
<dbReference type="PATRIC" id="fig|257313.5.peg.854"/>
<dbReference type="eggNOG" id="COG0149">
    <property type="taxonomic scope" value="Bacteria"/>
</dbReference>
<dbReference type="HOGENOM" id="CLU_024251_2_1_4"/>
<dbReference type="UniPathway" id="UPA00109">
    <property type="reaction ID" value="UER00189"/>
</dbReference>
<dbReference type="UniPathway" id="UPA00138"/>
<dbReference type="Proteomes" id="UP000002676">
    <property type="component" value="Chromosome"/>
</dbReference>
<dbReference type="GO" id="GO:0005829">
    <property type="term" value="C:cytosol"/>
    <property type="evidence" value="ECO:0007669"/>
    <property type="project" value="TreeGrafter"/>
</dbReference>
<dbReference type="GO" id="GO:0004807">
    <property type="term" value="F:triose-phosphate isomerase activity"/>
    <property type="evidence" value="ECO:0007669"/>
    <property type="project" value="UniProtKB-UniRule"/>
</dbReference>
<dbReference type="GO" id="GO:0006094">
    <property type="term" value="P:gluconeogenesis"/>
    <property type="evidence" value="ECO:0007669"/>
    <property type="project" value="UniProtKB-UniRule"/>
</dbReference>
<dbReference type="GO" id="GO:0046166">
    <property type="term" value="P:glyceraldehyde-3-phosphate biosynthetic process"/>
    <property type="evidence" value="ECO:0007669"/>
    <property type="project" value="TreeGrafter"/>
</dbReference>
<dbReference type="GO" id="GO:0019563">
    <property type="term" value="P:glycerol catabolic process"/>
    <property type="evidence" value="ECO:0007669"/>
    <property type="project" value="TreeGrafter"/>
</dbReference>
<dbReference type="GO" id="GO:0006096">
    <property type="term" value="P:glycolytic process"/>
    <property type="evidence" value="ECO:0007669"/>
    <property type="project" value="UniProtKB-UniRule"/>
</dbReference>
<dbReference type="CDD" id="cd00311">
    <property type="entry name" value="TIM"/>
    <property type="match status" value="1"/>
</dbReference>
<dbReference type="FunFam" id="3.20.20.70:FF:000016">
    <property type="entry name" value="Triosephosphate isomerase"/>
    <property type="match status" value="1"/>
</dbReference>
<dbReference type="Gene3D" id="3.20.20.70">
    <property type="entry name" value="Aldolase class I"/>
    <property type="match status" value="1"/>
</dbReference>
<dbReference type="HAMAP" id="MF_00147_B">
    <property type="entry name" value="TIM_B"/>
    <property type="match status" value="1"/>
</dbReference>
<dbReference type="InterPro" id="IPR013785">
    <property type="entry name" value="Aldolase_TIM"/>
</dbReference>
<dbReference type="InterPro" id="IPR035990">
    <property type="entry name" value="TIM_sf"/>
</dbReference>
<dbReference type="InterPro" id="IPR022896">
    <property type="entry name" value="TrioseP_Isoase_bac/euk"/>
</dbReference>
<dbReference type="InterPro" id="IPR000652">
    <property type="entry name" value="Triosephosphate_isomerase"/>
</dbReference>
<dbReference type="InterPro" id="IPR020861">
    <property type="entry name" value="Triosephosphate_isomerase_AS"/>
</dbReference>
<dbReference type="NCBIfam" id="TIGR00419">
    <property type="entry name" value="tim"/>
    <property type="match status" value="1"/>
</dbReference>
<dbReference type="PANTHER" id="PTHR21139">
    <property type="entry name" value="TRIOSEPHOSPHATE ISOMERASE"/>
    <property type="match status" value="1"/>
</dbReference>
<dbReference type="PANTHER" id="PTHR21139:SF42">
    <property type="entry name" value="TRIOSEPHOSPHATE ISOMERASE"/>
    <property type="match status" value="1"/>
</dbReference>
<dbReference type="Pfam" id="PF00121">
    <property type="entry name" value="TIM"/>
    <property type="match status" value="1"/>
</dbReference>
<dbReference type="SUPFAM" id="SSF51351">
    <property type="entry name" value="Triosephosphate isomerase (TIM)"/>
    <property type="match status" value="1"/>
</dbReference>
<dbReference type="PROSITE" id="PS00171">
    <property type="entry name" value="TIM_1"/>
    <property type="match status" value="1"/>
</dbReference>
<dbReference type="PROSITE" id="PS51440">
    <property type="entry name" value="TIM_2"/>
    <property type="match status" value="1"/>
</dbReference>
<comment type="function">
    <text evidence="1">Involved in the gluconeogenesis. Catalyzes stereospecifically the conversion of dihydroxyacetone phosphate (DHAP) to D-glyceraldehyde-3-phosphate (G3P).</text>
</comment>
<comment type="catalytic activity">
    <reaction evidence="1">
        <text>D-glyceraldehyde 3-phosphate = dihydroxyacetone phosphate</text>
        <dbReference type="Rhea" id="RHEA:18585"/>
        <dbReference type="ChEBI" id="CHEBI:57642"/>
        <dbReference type="ChEBI" id="CHEBI:59776"/>
        <dbReference type="EC" id="5.3.1.1"/>
    </reaction>
</comment>
<comment type="pathway">
    <text evidence="1">Carbohydrate biosynthesis; gluconeogenesis.</text>
</comment>
<comment type="pathway">
    <text evidence="1">Carbohydrate degradation; glycolysis; D-glyceraldehyde 3-phosphate from glycerone phosphate: step 1/1.</text>
</comment>
<comment type="subunit">
    <text evidence="1">Homodimer.</text>
</comment>
<comment type="subcellular location">
    <subcellularLocation>
        <location evidence="1">Cytoplasm</location>
    </subcellularLocation>
</comment>
<comment type="similarity">
    <text evidence="1">Belongs to the triosephosphate isomerase family.</text>
</comment>
<reference key="1">
    <citation type="journal article" date="2003" name="Nat. Genet.">
        <title>Comparative analysis of the genome sequences of Bordetella pertussis, Bordetella parapertussis and Bordetella bronchiseptica.</title>
        <authorList>
            <person name="Parkhill J."/>
            <person name="Sebaihia M."/>
            <person name="Preston A."/>
            <person name="Murphy L.D."/>
            <person name="Thomson N.R."/>
            <person name="Harris D.E."/>
            <person name="Holden M.T.G."/>
            <person name="Churcher C.M."/>
            <person name="Bentley S.D."/>
            <person name="Mungall K.L."/>
            <person name="Cerdeno-Tarraga A.-M."/>
            <person name="Temple L."/>
            <person name="James K.D."/>
            <person name="Harris B."/>
            <person name="Quail M.A."/>
            <person name="Achtman M."/>
            <person name="Atkin R."/>
            <person name="Baker S."/>
            <person name="Basham D."/>
            <person name="Bason N."/>
            <person name="Cherevach I."/>
            <person name="Chillingworth T."/>
            <person name="Collins M."/>
            <person name="Cronin A."/>
            <person name="Davis P."/>
            <person name="Doggett J."/>
            <person name="Feltwell T."/>
            <person name="Goble A."/>
            <person name="Hamlin N."/>
            <person name="Hauser H."/>
            <person name="Holroyd S."/>
            <person name="Jagels K."/>
            <person name="Leather S."/>
            <person name="Moule S."/>
            <person name="Norberczak H."/>
            <person name="O'Neil S."/>
            <person name="Ormond D."/>
            <person name="Price C."/>
            <person name="Rabbinowitsch E."/>
            <person name="Rutter S."/>
            <person name="Sanders M."/>
            <person name="Saunders D."/>
            <person name="Seeger K."/>
            <person name="Sharp S."/>
            <person name="Simmonds M."/>
            <person name="Skelton J."/>
            <person name="Squares R."/>
            <person name="Squares S."/>
            <person name="Stevens K."/>
            <person name="Unwin L."/>
            <person name="Whitehead S."/>
            <person name="Barrell B.G."/>
            <person name="Maskell D.J."/>
        </authorList>
    </citation>
    <scope>NUCLEOTIDE SEQUENCE [LARGE SCALE GENOMIC DNA]</scope>
    <source>
        <strain>Tohama I / ATCC BAA-589 / NCTC 13251</strain>
    </source>
</reference>
<name>TPIS_BORPE</name>
<proteinExistence type="inferred from homology"/>
<feature type="chain" id="PRO_0000090186" description="Triosephosphate isomerase">
    <location>
        <begin position="1"/>
        <end position="248"/>
    </location>
</feature>
<feature type="active site" description="Electrophile" evidence="1">
    <location>
        <position position="99"/>
    </location>
</feature>
<feature type="active site" description="Proton acceptor" evidence="1">
    <location>
        <position position="170"/>
    </location>
</feature>
<feature type="binding site" evidence="1">
    <location>
        <begin position="14"/>
        <end position="16"/>
    </location>
    <ligand>
        <name>substrate</name>
    </ligand>
</feature>
<feature type="binding site" evidence="1">
    <location>
        <position position="176"/>
    </location>
    <ligand>
        <name>substrate</name>
    </ligand>
</feature>
<feature type="binding site" evidence="1">
    <location>
        <position position="212"/>
    </location>
    <ligand>
        <name>substrate</name>
    </ligand>
</feature>
<feature type="binding site" evidence="1">
    <location>
        <begin position="233"/>
        <end position="234"/>
    </location>
    <ligand>
        <name>substrate</name>
    </ligand>
</feature>
<accession>Q7VZT5</accession>
<organism>
    <name type="scientific">Bordetella pertussis (strain Tohama I / ATCC BAA-589 / NCTC 13251)</name>
    <dbReference type="NCBI Taxonomy" id="257313"/>
    <lineage>
        <taxon>Bacteria</taxon>
        <taxon>Pseudomonadati</taxon>
        <taxon>Pseudomonadota</taxon>
        <taxon>Betaproteobacteria</taxon>
        <taxon>Burkholderiales</taxon>
        <taxon>Alcaligenaceae</taxon>
        <taxon>Bordetella</taxon>
    </lineage>
</organism>
<keyword id="KW-0963">Cytoplasm</keyword>
<keyword id="KW-0312">Gluconeogenesis</keyword>
<keyword id="KW-0324">Glycolysis</keyword>
<keyword id="KW-0413">Isomerase</keyword>
<keyword id="KW-1185">Reference proteome</keyword>
<protein>
    <recommendedName>
        <fullName evidence="1">Triosephosphate isomerase</fullName>
        <shortName evidence="1">TIM</shortName>
        <shortName evidence="1">TPI</shortName>
        <ecNumber evidence="1">5.3.1.1</ecNumber>
    </recommendedName>
    <alternativeName>
        <fullName evidence="1">Triose-phosphate isomerase</fullName>
    </alternativeName>
</protein>
<sequence length="248" mass="25818">MTTAENRARLVLGNWKMHGNLAENAALLAELRAADAAAHCEMGVCVPFPYLAQTAAALQGSAIGWGAQDVSAHAKGAYTGEVAAPMLAEFGCRWVLVGHSERRTLHAESDQLVADKARAALEAGLTPVVCVGESLQEREGGNTLGVIERQLEPVLALGRDALVRMVLAYEPVWAIGTGRTASPEQAQEVHSAIRVALDGLQASQVRVLYGGSVKGANAASLFAMPDIDGGLVGGASLVAEEFLRIAAA</sequence>
<evidence type="ECO:0000255" key="1">
    <source>
        <dbReference type="HAMAP-Rule" id="MF_00147"/>
    </source>
</evidence>
<gene>
    <name evidence="1" type="primary">tpiA</name>
    <name type="synonym">tpi</name>
    <name type="ordered locus">BP0801</name>
</gene>